<keyword id="KW-0413">Isomerase</keyword>
<keyword id="KW-0460">Magnesium</keyword>
<keyword id="KW-0479">Metal-binding</keyword>
<keyword id="KW-0597">Phosphoprotein</keyword>
<reference key="1">
    <citation type="submission" date="2006-09" db="EMBL/GenBank/DDBJ databases">
        <title>Complete sequence of chromosome 1 of Shewanella sp. ANA-3.</title>
        <authorList>
            <person name="Copeland A."/>
            <person name="Lucas S."/>
            <person name="Lapidus A."/>
            <person name="Barry K."/>
            <person name="Detter J.C."/>
            <person name="Glavina del Rio T."/>
            <person name="Hammon N."/>
            <person name="Israni S."/>
            <person name="Dalin E."/>
            <person name="Tice H."/>
            <person name="Pitluck S."/>
            <person name="Chertkov O."/>
            <person name="Brettin T."/>
            <person name="Bruce D."/>
            <person name="Han C."/>
            <person name="Tapia R."/>
            <person name="Gilna P."/>
            <person name="Schmutz J."/>
            <person name="Larimer F."/>
            <person name="Land M."/>
            <person name="Hauser L."/>
            <person name="Kyrpides N."/>
            <person name="Kim E."/>
            <person name="Newman D."/>
            <person name="Salticov C."/>
            <person name="Konstantinidis K."/>
            <person name="Klappenback J."/>
            <person name="Tiedje J."/>
            <person name="Richardson P."/>
        </authorList>
    </citation>
    <scope>NUCLEOTIDE SEQUENCE [LARGE SCALE GENOMIC DNA]</scope>
    <source>
        <strain>ANA-3</strain>
    </source>
</reference>
<feature type="chain" id="PRO_0000301377" description="Phosphoglucosamine mutase">
    <location>
        <begin position="1"/>
        <end position="445"/>
    </location>
</feature>
<feature type="active site" description="Phosphoserine intermediate" evidence="1">
    <location>
        <position position="102"/>
    </location>
</feature>
<feature type="binding site" description="via phosphate group" evidence="1">
    <location>
        <position position="102"/>
    </location>
    <ligand>
        <name>Mg(2+)</name>
        <dbReference type="ChEBI" id="CHEBI:18420"/>
    </ligand>
</feature>
<feature type="binding site" evidence="1">
    <location>
        <position position="241"/>
    </location>
    <ligand>
        <name>Mg(2+)</name>
        <dbReference type="ChEBI" id="CHEBI:18420"/>
    </ligand>
</feature>
<feature type="binding site" evidence="1">
    <location>
        <position position="243"/>
    </location>
    <ligand>
        <name>Mg(2+)</name>
        <dbReference type="ChEBI" id="CHEBI:18420"/>
    </ligand>
</feature>
<feature type="binding site" evidence="1">
    <location>
        <position position="245"/>
    </location>
    <ligand>
        <name>Mg(2+)</name>
        <dbReference type="ChEBI" id="CHEBI:18420"/>
    </ligand>
</feature>
<feature type="modified residue" description="Phosphoserine" evidence="1">
    <location>
        <position position="102"/>
    </location>
</feature>
<protein>
    <recommendedName>
        <fullName evidence="1">Phosphoglucosamine mutase</fullName>
        <ecNumber evidence="1">5.4.2.10</ecNumber>
    </recommendedName>
</protein>
<dbReference type="EC" id="5.4.2.10" evidence="1"/>
<dbReference type="EMBL" id="CP000469">
    <property type="protein sequence ID" value="ABK47260.1"/>
    <property type="molecule type" value="Genomic_DNA"/>
</dbReference>
<dbReference type="RefSeq" id="WP_011716139.1">
    <property type="nucleotide sequence ID" value="NC_008577.1"/>
</dbReference>
<dbReference type="SMR" id="A0KTZ1"/>
<dbReference type="STRING" id="94122.Shewana3_1025"/>
<dbReference type="KEGG" id="shn:Shewana3_1025"/>
<dbReference type="eggNOG" id="COG1109">
    <property type="taxonomic scope" value="Bacteria"/>
</dbReference>
<dbReference type="HOGENOM" id="CLU_016950_7_0_6"/>
<dbReference type="OrthoDB" id="9803322at2"/>
<dbReference type="Proteomes" id="UP000002589">
    <property type="component" value="Chromosome"/>
</dbReference>
<dbReference type="GO" id="GO:0005829">
    <property type="term" value="C:cytosol"/>
    <property type="evidence" value="ECO:0007669"/>
    <property type="project" value="TreeGrafter"/>
</dbReference>
<dbReference type="GO" id="GO:0000287">
    <property type="term" value="F:magnesium ion binding"/>
    <property type="evidence" value="ECO:0007669"/>
    <property type="project" value="UniProtKB-UniRule"/>
</dbReference>
<dbReference type="GO" id="GO:0008966">
    <property type="term" value="F:phosphoglucosamine mutase activity"/>
    <property type="evidence" value="ECO:0007669"/>
    <property type="project" value="UniProtKB-UniRule"/>
</dbReference>
<dbReference type="GO" id="GO:0004615">
    <property type="term" value="F:phosphomannomutase activity"/>
    <property type="evidence" value="ECO:0007669"/>
    <property type="project" value="TreeGrafter"/>
</dbReference>
<dbReference type="GO" id="GO:0005975">
    <property type="term" value="P:carbohydrate metabolic process"/>
    <property type="evidence" value="ECO:0007669"/>
    <property type="project" value="InterPro"/>
</dbReference>
<dbReference type="GO" id="GO:0009252">
    <property type="term" value="P:peptidoglycan biosynthetic process"/>
    <property type="evidence" value="ECO:0007669"/>
    <property type="project" value="TreeGrafter"/>
</dbReference>
<dbReference type="GO" id="GO:0006048">
    <property type="term" value="P:UDP-N-acetylglucosamine biosynthetic process"/>
    <property type="evidence" value="ECO:0007669"/>
    <property type="project" value="TreeGrafter"/>
</dbReference>
<dbReference type="CDD" id="cd05802">
    <property type="entry name" value="GlmM"/>
    <property type="match status" value="1"/>
</dbReference>
<dbReference type="FunFam" id="3.30.310.50:FF:000001">
    <property type="entry name" value="Phosphoglucosamine mutase"/>
    <property type="match status" value="1"/>
</dbReference>
<dbReference type="FunFam" id="3.40.120.10:FF:000001">
    <property type="entry name" value="Phosphoglucosamine mutase"/>
    <property type="match status" value="1"/>
</dbReference>
<dbReference type="FunFam" id="3.40.120.10:FF:000003">
    <property type="entry name" value="Phosphoglucosamine mutase"/>
    <property type="match status" value="1"/>
</dbReference>
<dbReference type="Gene3D" id="3.40.120.10">
    <property type="entry name" value="Alpha-D-Glucose-1,6-Bisphosphate, subunit A, domain 3"/>
    <property type="match status" value="3"/>
</dbReference>
<dbReference type="Gene3D" id="3.30.310.50">
    <property type="entry name" value="Alpha-D-phosphohexomutase, C-terminal domain"/>
    <property type="match status" value="1"/>
</dbReference>
<dbReference type="HAMAP" id="MF_01554_B">
    <property type="entry name" value="GlmM_B"/>
    <property type="match status" value="1"/>
</dbReference>
<dbReference type="InterPro" id="IPR005844">
    <property type="entry name" value="A-D-PHexomutase_a/b/a-I"/>
</dbReference>
<dbReference type="InterPro" id="IPR016055">
    <property type="entry name" value="A-D-PHexomutase_a/b/a-I/II/III"/>
</dbReference>
<dbReference type="InterPro" id="IPR005845">
    <property type="entry name" value="A-D-PHexomutase_a/b/a-II"/>
</dbReference>
<dbReference type="InterPro" id="IPR005846">
    <property type="entry name" value="A-D-PHexomutase_a/b/a-III"/>
</dbReference>
<dbReference type="InterPro" id="IPR005843">
    <property type="entry name" value="A-D-PHexomutase_C"/>
</dbReference>
<dbReference type="InterPro" id="IPR036900">
    <property type="entry name" value="A-D-PHexomutase_C_sf"/>
</dbReference>
<dbReference type="InterPro" id="IPR016066">
    <property type="entry name" value="A-D-PHexomutase_CS"/>
</dbReference>
<dbReference type="InterPro" id="IPR005841">
    <property type="entry name" value="Alpha-D-phosphohexomutase_SF"/>
</dbReference>
<dbReference type="InterPro" id="IPR006352">
    <property type="entry name" value="GlmM_bact"/>
</dbReference>
<dbReference type="InterPro" id="IPR050060">
    <property type="entry name" value="Phosphoglucosamine_mutase"/>
</dbReference>
<dbReference type="NCBIfam" id="TIGR01455">
    <property type="entry name" value="glmM"/>
    <property type="match status" value="1"/>
</dbReference>
<dbReference type="NCBIfam" id="NF008139">
    <property type="entry name" value="PRK10887.1"/>
    <property type="match status" value="1"/>
</dbReference>
<dbReference type="PANTHER" id="PTHR42946:SF1">
    <property type="entry name" value="PHOSPHOGLUCOMUTASE (ALPHA-D-GLUCOSE-1,6-BISPHOSPHATE-DEPENDENT)"/>
    <property type="match status" value="1"/>
</dbReference>
<dbReference type="PANTHER" id="PTHR42946">
    <property type="entry name" value="PHOSPHOHEXOSE MUTASE"/>
    <property type="match status" value="1"/>
</dbReference>
<dbReference type="Pfam" id="PF02878">
    <property type="entry name" value="PGM_PMM_I"/>
    <property type="match status" value="1"/>
</dbReference>
<dbReference type="Pfam" id="PF02879">
    <property type="entry name" value="PGM_PMM_II"/>
    <property type="match status" value="1"/>
</dbReference>
<dbReference type="Pfam" id="PF02880">
    <property type="entry name" value="PGM_PMM_III"/>
    <property type="match status" value="1"/>
</dbReference>
<dbReference type="Pfam" id="PF00408">
    <property type="entry name" value="PGM_PMM_IV"/>
    <property type="match status" value="1"/>
</dbReference>
<dbReference type="PRINTS" id="PR00509">
    <property type="entry name" value="PGMPMM"/>
</dbReference>
<dbReference type="SUPFAM" id="SSF55957">
    <property type="entry name" value="Phosphoglucomutase, C-terminal domain"/>
    <property type="match status" value="1"/>
</dbReference>
<dbReference type="SUPFAM" id="SSF53738">
    <property type="entry name" value="Phosphoglucomutase, first 3 domains"/>
    <property type="match status" value="3"/>
</dbReference>
<dbReference type="PROSITE" id="PS00710">
    <property type="entry name" value="PGM_PMM"/>
    <property type="match status" value="1"/>
</dbReference>
<gene>
    <name evidence="1" type="primary">glmM</name>
    <name type="ordered locus">Shewana3_1025</name>
</gene>
<name>GLMM_SHESA</name>
<comment type="function">
    <text evidence="1">Catalyzes the conversion of glucosamine-6-phosphate to glucosamine-1-phosphate.</text>
</comment>
<comment type="catalytic activity">
    <reaction evidence="1">
        <text>alpha-D-glucosamine 1-phosphate = D-glucosamine 6-phosphate</text>
        <dbReference type="Rhea" id="RHEA:23424"/>
        <dbReference type="ChEBI" id="CHEBI:58516"/>
        <dbReference type="ChEBI" id="CHEBI:58725"/>
        <dbReference type="EC" id="5.4.2.10"/>
    </reaction>
</comment>
<comment type="cofactor">
    <cofactor evidence="1">
        <name>Mg(2+)</name>
        <dbReference type="ChEBI" id="CHEBI:18420"/>
    </cofactor>
    <text evidence="1">Binds 1 Mg(2+) ion per subunit.</text>
</comment>
<comment type="PTM">
    <text evidence="1">Activated by phosphorylation.</text>
</comment>
<comment type="similarity">
    <text evidence="1">Belongs to the phosphohexose mutase family.</text>
</comment>
<accession>A0KTZ1</accession>
<organism>
    <name type="scientific">Shewanella sp. (strain ANA-3)</name>
    <dbReference type="NCBI Taxonomy" id="94122"/>
    <lineage>
        <taxon>Bacteria</taxon>
        <taxon>Pseudomonadati</taxon>
        <taxon>Pseudomonadota</taxon>
        <taxon>Gammaproteobacteria</taxon>
        <taxon>Alteromonadales</taxon>
        <taxon>Shewanellaceae</taxon>
        <taxon>Shewanella</taxon>
    </lineage>
</organism>
<evidence type="ECO:0000255" key="1">
    <source>
        <dbReference type="HAMAP-Rule" id="MF_01554"/>
    </source>
</evidence>
<proteinExistence type="inferred from homology"/>
<sequence>MSERKFFGTDGIRGKVGSGQMTPELALKLGWAAGRVLSRSGTKKVIIGKDTRISGYMFESALEAGLSAAGLNVMLMGPMPTPAVAYLTRTFRAEAGVVISASHNPYYDNGIKFFSTDGSKLDDNLELEIEAELEKPLECVESHLLGKVSRIEDARGRYIEYCKGNFPADQTLTGLKIVVDCAHGATYHIAPAVFRELGAEVIAIGDKPNGVNINDKVGATSMAKICETVLTEGADLGIALDGDGDRIMMVNSRGEVIDGDQILYILACDAKARGVLRGGVVGTLMSNLGLDLALQALDIPFARSKVGDRYVMELLKELDWRIGGENSGHILNLDHGTTGDGIVAGILVLAAMRRQNATLEQLTAPMEMLPQVLVNVRFEGEHDPLSSDKVKAAQAQVESELGARGRVLLRKSGTEPLIRVMVEGDDHNTVLAHANLIADAVKSAS</sequence>